<sequence>MAEVSAQMVKELRERTNAGMMDCKKALAESGGDFAKAEEWLRKKGIAKAAGKEGRVASEGIIGTYVHSGRIGVIVEVNCETDFVARNPDFQELVKDVAMQIAAAGPKFVRREEVPTDNLDKEKDIQREILKQQGKPEAMLEKILVGKMEKYYEGVCLVDQLWVKDDKKKVGEMISERAAKIGEKVSVRRFVRYELGEGIEKKKDDLAAEVAKTLGQA</sequence>
<organism>
    <name type="scientific">Myxococcus xanthus (strain DK1622)</name>
    <dbReference type="NCBI Taxonomy" id="246197"/>
    <lineage>
        <taxon>Bacteria</taxon>
        <taxon>Pseudomonadati</taxon>
        <taxon>Myxococcota</taxon>
        <taxon>Myxococcia</taxon>
        <taxon>Myxococcales</taxon>
        <taxon>Cystobacterineae</taxon>
        <taxon>Myxococcaceae</taxon>
        <taxon>Myxococcus</taxon>
    </lineage>
</organism>
<evidence type="ECO:0000255" key="1">
    <source>
        <dbReference type="HAMAP-Rule" id="MF_00050"/>
    </source>
</evidence>
<keyword id="KW-0963">Cytoplasm</keyword>
<keyword id="KW-0251">Elongation factor</keyword>
<keyword id="KW-0648">Protein biosynthesis</keyword>
<keyword id="KW-1185">Reference proteome</keyword>
<name>EFTS_MYXXD</name>
<reference key="1">
    <citation type="journal article" date="2006" name="Proc. Natl. Acad. Sci. U.S.A.">
        <title>Evolution of sensory complexity recorded in a myxobacterial genome.</title>
        <authorList>
            <person name="Goldman B.S."/>
            <person name="Nierman W.C."/>
            <person name="Kaiser D."/>
            <person name="Slater S.C."/>
            <person name="Durkin A.S."/>
            <person name="Eisen J.A."/>
            <person name="Ronning C.M."/>
            <person name="Barbazuk W.B."/>
            <person name="Blanchard M."/>
            <person name="Field C."/>
            <person name="Halling C."/>
            <person name="Hinkle G."/>
            <person name="Iartchuk O."/>
            <person name="Kim H.S."/>
            <person name="Mackenzie C."/>
            <person name="Madupu R."/>
            <person name="Miller N."/>
            <person name="Shvartsbeyn A."/>
            <person name="Sullivan S.A."/>
            <person name="Vaudin M."/>
            <person name="Wiegand R."/>
            <person name="Kaplan H.B."/>
        </authorList>
    </citation>
    <scope>NUCLEOTIDE SEQUENCE [LARGE SCALE GENOMIC DNA]</scope>
    <source>
        <strain>DK1622</strain>
    </source>
</reference>
<proteinExistence type="inferred from homology"/>
<dbReference type="EMBL" id="CP000113">
    <property type="protein sequence ID" value="ABF86358.1"/>
    <property type="molecule type" value="Genomic_DNA"/>
</dbReference>
<dbReference type="RefSeq" id="WP_011555308.1">
    <property type="nucleotide sequence ID" value="NC_008095.1"/>
</dbReference>
<dbReference type="SMR" id="Q1D1I0"/>
<dbReference type="STRING" id="246197.MXAN_5343"/>
<dbReference type="EnsemblBacteria" id="ABF86358">
    <property type="protein sequence ID" value="ABF86358"/>
    <property type="gene ID" value="MXAN_5343"/>
</dbReference>
<dbReference type="GeneID" id="41362612"/>
<dbReference type="KEGG" id="mxa:MXAN_5343"/>
<dbReference type="eggNOG" id="COG0264">
    <property type="taxonomic scope" value="Bacteria"/>
</dbReference>
<dbReference type="HOGENOM" id="CLU_047155_1_1_7"/>
<dbReference type="OrthoDB" id="9808348at2"/>
<dbReference type="Proteomes" id="UP000002402">
    <property type="component" value="Chromosome"/>
</dbReference>
<dbReference type="GO" id="GO:0005737">
    <property type="term" value="C:cytoplasm"/>
    <property type="evidence" value="ECO:0007669"/>
    <property type="project" value="UniProtKB-SubCell"/>
</dbReference>
<dbReference type="GO" id="GO:0003746">
    <property type="term" value="F:translation elongation factor activity"/>
    <property type="evidence" value="ECO:0007669"/>
    <property type="project" value="UniProtKB-UniRule"/>
</dbReference>
<dbReference type="CDD" id="cd14275">
    <property type="entry name" value="UBA_EF-Ts"/>
    <property type="match status" value="1"/>
</dbReference>
<dbReference type="FunFam" id="1.10.8.10:FF:000001">
    <property type="entry name" value="Elongation factor Ts"/>
    <property type="match status" value="1"/>
</dbReference>
<dbReference type="Gene3D" id="1.10.286.20">
    <property type="match status" value="1"/>
</dbReference>
<dbReference type="Gene3D" id="1.10.8.10">
    <property type="entry name" value="DNA helicase RuvA subunit, C-terminal domain"/>
    <property type="match status" value="1"/>
</dbReference>
<dbReference type="Gene3D" id="3.30.479.20">
    <property type="entry name" value="Elongation factor Ts, dimerisation domain"/>
    <property type="match status" value="1"/>
</dbReference>
<dbReference type="HAMAP" id="MF_00050">
    <property type="entry name" value="EF_Ts"/>
    <property type="match status" value="1"/>
</dbReference>
<dbReference type="InterPro" id="IPR036402">
    <property type="entry name" value="EF-Ts_dimer_sf"/>
</dbReference>
<dbReference type="InterPro" id="IPR001816">
    <property type="entry name" value="Transl_elong_EFTs/EF1B"/>
</dbReference>
<dbReference type="InterPro" id="IPR014039">
    <property type="entry name" value="Transl_elong_EFTs/EF1B_dimer"/>
</dbReference>
<dbReference type="InterPro" id="IPR018101">
    <property type="entry name" value="Transl_elong_Ts_CS"/>
</dbReference>
<dbReference type="InterPro" id="IPR009060">
    <property type="entry name" value="UBA-like_sf"/>
</dbReference>
<dbReference type="NCBIfam" id="TIGR00116">
    <property type="entry name" value="tsf"/>
    <property type="match status" value="2"/>
</dbReference>
<dbReference type="PANTHER" id="PTHR11741">
    <property type="entry name" value="ELONGATION FACTOR TS"/>
    <property type="match status" value="1"/>
</dbReference>
<dbReference type="PANTHER" id="PTHR11741:SF0">
    <property type="entry name" value="ELONGATION FACTOR TS, MITOCHONDRIAL"/>
    <property type="match status" value="1"/>
</dbReference>
<dbReference type="Pfam" id="PF00889">
    <property type="entry name" value="EF_TS"/>
    <property type="match status" value="1"/>
</dbReference>
<dbReference type="SUPFAM" id="SSF54713">
    <property type="entry name" value="Elongation factor Ts (EF-Ts), dimerisation domain"/>
    <property type="match status" value="1"/>
</dbReference>
<dbReference type="SUPFAM" id="SSF46934">
    <property type="entry name" value="UBA-like"/>
    <property type="match status" value="1"/>
</dbReference>
<dbReference type="PROSITE" id="PS01126">
    <property type="entry name" value="EF_TS_1"/>
    <property type="match status" value="1"/>
</dbReference>
<dbReference type="PROSITE" id="PS01127">
    <property type="entry name" value="EF_TS_2"/>
    <property type="match status" value="1"/>
</dbReference>
<feature type="chain" id="PRO_1000006135" description="Elongation factor Ts">
    <location>
        <begin position="1"/>
        <end position="217"/>
    </location>
</feature>
<feature type="region of interest" description="Involved in Mg(2+) ion dislocation from EF-Tu" evidence="1">
    <location>
        <begin position="81"/>
        <end position="84"/>
    </location>
</feature>
<comment type="function">
    <text evidence="1">Associates with the EF-Tu.GDP complex and induces the exchange of GDP to GTP. It remains bound to the aminoacyl-tRNA.EF-Tu.GTP complex up to the GTP hydrolysis stage on the ribosome.</text>
</comment>
<comment type="subcellular location">
    <subcellularLocation>
        <location evidence="1">Cytoplasm</location>
    </subcellularLocation>
</comment>
<comment type="similarity">
    <text evidence="1">Belongs to the EF-Ts family.</text>
</comment>
<gene>
    <name evidence="1" type="primary">tsf</name>
    <name type="ordered locus">MXAN_5343</name>
</gene>
<protein>
    <recommendedName>
        <fullName evidence="1">Elongation factor Ts</fullName>
        <shortName evidence="1">EF-Ts</shortName>
    </recommendedName>
</protein>
<accession>Q1D1I0</accession>